<proteinExistence type="predicted"/>
<evidence type="ECO:0000255" key="1"/>
<feature type="chain" id="PRO_0000390394" description="Uncharacterized protein YjlB">
    <location>
        <begin position="1"/>
        <end position="165"/>
    </location>
</feature>
<feature type="domain" description="Cupin type-1" evidence="1">
    <location>
        <begin position="28"/>
        <end position="139"/>
    </location>
</feature>
<organism>
    <name type="scientific">Bacillus subtilis (strain 168)</name>
    <dbReference type="NCBI Taxonomy" id="224308"/>
    <lineage>
        <taxon>Bacteria</taxon>
        <taxon>Bacillati</taxon>
        <taxon>Bacillota</taxon>
        <taxon>Bacilli</taxon>
        <taxon>Bacillales</taxon>
        <taxon>Bacillaceae</taxon>
        <taxon>Bacillus</taxon>
    </lineage>
</organism>
<gene>
    <name type="primary">yjlB</name>
    <name type="ordered locus">BSU12270</name>
</gene>
<accession>O34612</accession>
<accession>Q796N3</accession>
<dbReference type="EMBL" id="AF015825">
    <property type="protein sequence ID" value="AAC46323.1"/>
    <property type="molecule type" value="Genomic_DNA"/>
</dbReference>
<dbReference type="EMBL" id="AL009126">
    <property type="protein sequence ID" value="CAB13084.1"/>
    <property type="molecule type" value="Genomic_DNA"/>
</dbReference>
<dbReference type="PIR" id="H69851">
    <property type="entry name" value="H69851"/>
</dbReference>
<dbReference type="RefSeq" id="NP_389109.1">
    <property type="nucleotide sequence ID" value="NC_000964.3"/>
</dbReference>
<dbReference type="RefSeq" id="WP_003232768.1">
    <property type="nucleotide sequence ID" value="NZ_OZ025638.1"/>
</dbReference>
<dbReference type="FunCoup" id="O34612">
    <property type="interactions" value="47"/>
</dbReference>
<dbReference type="STRING" id="224308.BSU12270"/>
<dbReference type="PaxDb" id="224308-BSU12270"/>
<dbReference type="EnsemblBacteria" id="CAB13084">
    <property type="protein sequence ID" value="CAB13084"/>
    <property type="gene ID" value="BSU_12270"/>
</dbReference>
<dbReference type="GeneID" id="939411"/>
<dbReference type="KEGG" id="bsu:BSU12270"/>
<dbReference type="PATRIC" id="fig|224308.179.peg.1326"/>
<dbReference type="eggNOG" id="COG4297">
    <property type="taxonomic scope" value="Bacteria"/>
</dbReference>
<dbReference type="InParanoid" id="O34612"/>
<dbReference type="OrthoDB" id="9791759at2"/>
<dbReference type="PhylomeDB" id="O34612"/>
<dbReference type="BioCyc" id="BSUB:BSU12270-MONOMER"/>
<dbReference type="Proteomes" id="UP000001570">
    <property type="component" value="Chromosome"/>
</dbReference>
<dbReference type="CDD" id="cd02219">
    <property type="entry name" value="cupin_YjlB-like"/>
    <property type="match status" value="1"/>
</dbReference>
<dbReference type="Gene3D" id="2.60.120.10">
    <property type="entry name" value="Jelly Rolls"/>
    <property type="match status" value="1"/>
</dbReference>
<dbReference type="InterPro" id="IPR006045">
    <property type="entry name" value="Cupin_1"/>
</dbReference>
<dbReference type="InterPro" id="IPR014710">
    <property type="entry name" value="RmlC-like_jellyroll"/>
</dbReference>
<dbReference type="InterPro" id="IPR011051">
    <property type="entry name" value="RmlC_Cupin_sf"/>
</dbReference>
<dbReference type="InterPro" id="IPR014500">
    <property type="entry name" value="UCP019307_cupin"/>
</dbReference>
<dbReference type="InterPro" id="IPR047121">
    <property type="entry name" value="YjiB-like"/>
</dbReference>
<dbReference type="PANTHER" id="PTHR36448">
    <property type="entry name" value="BLR7373 PROTEIN"/>
    <property type="match status" value="1"/>
</dbReference>
<dbReference type="PANTHER" id="PTHR36448:SF2">
    <property type="entry name" value="CUPIN TYPE-1 DOMAIN-CONTAINING PROTEIN"/>
    <property type="match status" value="1"/>
</dbReference>
<dbReference type="PIRSF" id="PIRSF019307">
    <property type="entry name" value="UCP019307"/>
    <property type="match status" value="1"/>
</dbReference>
<dbReference type="SMART" id="SM00835">
    <property type="entry name" value="Cupin_1"/>
    <property type="match status" value="1"/>
</dbReference>
<dbReference type="SUPFAM" id="SSF51182">
    <property type="entry name" value="RmlC-like cupins"/>
    <property type="match status" value="1"/>
</dbReference>
<protein>
    <recommendedName>
        <fullName>Uncharacterized protein YjlB</fullName>
    </recommendedName>
</protein>
<keyword id="KW-1185">Reference proteome</keyword>
<reference key="1">
    <citation type="journal article" date="1998" name="Microbiology">
        <title>A 35.7 kb DNA fragment from the Bacillus subtilis chromosome containing a putative 12.3 kb operon involved in hexuronate catabolism and a perfectly symmetrical hypothetical catabolite-responsive element.</title>
        <authorList>
            <person name="Rivolta C."/>
            <person name="Soldo B."/>
            <person name="Lazarevic V."/>
            <person name="Joris B."/>
            <person name="Mauel C."/>
            <person name="Karamata D."/>
        </authorList>
    </citation>
    <scope>NUCLEOTIDE SEQUENCE [GENOMIC DNA]</scope>
    <source>
        <strain>168</strain>
    </source>
</reference>
<reference key="2">
    <citation type="journal article" date="1997" name="Nature">
        <title>The complete genome sequence of the Gram-positive bacterium Bacillus subtilis.</title>
        <authorList>
            <person name="Kunst F."/>
            <person name="Ogasawara N."/>
            <person name="Moszer I."/>
            <person name="Albertini A.M."/>
            <person name="Alloni G."/>
            <person name="Azevedo V."/>
            <person name="Bertero M.G."/>
            <person name="Bessieres P."/>
            <person name="Bolotin A."/>
            <person name="Borchert S."/>
            <person name="Borriss R."/>
            <person name="Boursier L."/>
            <person name="Brans A."/>
            <person name="Braun M."/>
            <person name="Brignell S.C."/>
            <person name="Bron S."/>
            <person name="Brouillet S."/>
            <person name="Bruschi C.V."/>
            <person name="Caldwell B."/>
            <person name="Capuano V."/>
            <person name="Carter N.M."/>
            <person name="Choi S.-K."/>
            <person name="Codani J.-J."/>
            <person name="Connerton I.F."/>
            <person name="Cummings N.J."/>
            <person name="Daniel R.A."/>
            <person name="Denizot F."/>
            <person name="Devine K.M."/>
            <person name="Duesterhoeft A."/>
            <person name="Ehrlich S.D."/>
            <person name="Emmerson P.T."/>
            <person name="Entian K.-D."/>
            <person name="Errington J."/>
            <person name="Fabret C."/>
            <person name="Ferrari E."/>
            <person name="Foulger D."/>
            <person name="Fritz C."/>
            <person name="Fujita M."/>
            <person name="Fujita Y."/>
            <person name="Fuma S."/>
            <person name="Galizzi A."/>
            <person name="Galleron N."/>
            <person name="Ghim S.-Y."/>
            <person name="Glaser P."/>
            <person name="Goffeau A."/>
            <person name="Golightly E.J."/>
            <person name="Grandi G."/>
            <person name="Guiseppi G."/>
            <person name="Guy B.J."/>
            <person name="Haga K."/>
            <person name="Haiech J."/>
            <person name="Harwood C.R."/>
            <person name="Henaut A."/>
            <person name="Hilbert H."/>
            <person name="Holsappel S."/>
            <person name="Hosono S."/>
            <person name="Hullo M.-F."/>
            <person name="Itaya M."/>
            <person name="Jones L.-M."/>
            <person name="Joris B."/>
            <person name="Karamata D."/>
            <person name="Kasahara Y."/>
            <person name="Klaerr-Blanchard M."/>
            <person name="Klein C."/>
            <person name="Kobayashi Y."/>
            <person name="Koetter P."/>
            <person name="Koningstein G."/>
            <person name="Krogh S."/>
            <person name="Kumano M."/>
            <person name="Kurita K."/>
            <person name="Lapidus A."/>
            <person name="Lardinois S."/>
            <person name="Lauber J."/>
            <person name="Lazarevic V."/>
            <person name="Lee S.-M."/>
            <person name="Levine A."/>
            <person name="Liu H."/>
            <person name="Masuda S."/>
            <person name="Mauel C."/>
            <person name="Medigue C."/>
            <person name="Medina N."/>
            <person name="Mellado R.P."/>
            <person name="Mizuno M."/>
            <person name="Moestl D."/>
            <person name="Nakai S."/>
            <person name="Noback M."/>
            <person name="Noone D."/>
            <person name="O'Reilly M."/>
            <person name="Ogawa K."/>
            <person name="Ogiwara A."/>
            <person name="Oudega B."/>
            <person name="Park S.-H."/>
            <person name="Parro V."/>
            <person name="Pohl T.M."/>
            <person name="Portetelle D."/>
            <person name="Porwollik S."/>
            <person name="Prescott A.M."/>
            <person name="Presecan E."/>
            <person name="Pujic P."/>
            <person name="Purnelle B."/>
            <person name="Rapoport G."/>
            <person name="Rey M."/>
            <person name="Reynolds S."/>
            <person name="Rieger M."/>
            <person name="Rivolta C."/>
            <person name="Rocha E."/>
            <person name="Roche B."/>
            <person name="Rose M."/>
            <person name="Sadaie Y."/>
            <person name="Sato T."/>
            <person name="Scanlan E."/>
            <person name="Schleich S."/>
            <person name="Schroeter R."/>
            <person name="Scoffone F."/>
            <person name="Sekiguchi J."/>
            <person name="Sekowska A."/>
            <person name="Seror S.J."/>
            <person name="Serror P."/>
            <person name="Shin B.-S."/>
            <person name="Soldo B."/>
            <person name="Sorokin A."/>
            <person name="Tacconi E."/>
            <person name="Takagi T."/>
            <person name="Takahashi H."/>
            <person name="Takemaru K."/>
            <person name="Takeuchi M."/>
            <person name="Tamakoshi A."/>
            <person name="Tanaka T."/>
            <person name="Terpstra P."/>
            <person name="Tognoni A."/>
            <person name="Tosato V."/>
            <person name="Uchiyama S."/>
            <person name="Vandenbol M."/>
            <person name="Vannier F."/>
            <person name="Vassarotti A."/>
            <person name="Viari A."/>
            <person name="Wambutt R."/>
            <person name="Wedler E."/>
            <person name="Wedler H."/>
            <person name="Weitzenegger T."/>
            <person name="Winters P."/>
            <person name="Wipat A."/>
            <person name="Yamamoto H."/>
            <person name="Yamane K."/>
            <person name="Yasumoto K."/>
            <person name="Yata K."/>
            <person name="Yoshida K."/>
            <person name="Yoshikawa H.-F."/>
            <person name="Zumstein E."/>
            <person name="Yoshikawa H."/>
            <person name="Danchin A."/>
        </authorList>
    </citation>
    <scope>NUCLEOTIDE SEQUENCE [LARGE SCALE GENOMIC DNA]</scope>
    <source>
        <strain>168</strain>
    </source>
</reference>
<name>YJLB_BACSU</name>
<sequence length="165" mass="18336">MERETQTYFFPDDGRIPNHPDFPLVVYQNALKDTGLAERIVTRHGWSNSWSGSVFPYHHYHSNTHEVLIALRREAVIQFGGEKGAAIPFKSGDAVVIPAGVGHKKLSSSPDFTVLGAYPGGVQYDMKTGKPNEREEAVKQIKQAALPANDPITGKREPLLEIWVK</sequence>